<dbReference type="EC" id="2.4.1.-" evidence="4"/>
<dbReference type="EMBL" id="KY906064">
    <property type="protein sequence ID" value="ARJ31428.1"/>
    <property type="molecule type" value="mRNA"/>
</dbReference>
<dbReference type="EMBL" id="AC013483">
    <property type="protein sequence ID" value="AAF21200.1"/>
    <property type="molecule type" value="Genomic_DNA"/>
</dbReference>
<dbReference type="EMBL" id="CP002686">
    <property type="protein sequence ID" value="AEE74617.1"/>
    <property type="molecule type" value="Genomic_DNA"/>
</dbReference>
<dbReference type="EMBL" id="AF428423">
    <property type="protein sequence ID" value="AAL16192.1"/>
    <property type="status" value="ALT_FRAME"/>
    <property type="molecule type" value="mRNA"/>
</dbReference>
<dbReference type="RefSeq" id="NP_187447.1">
    <property type="nucleotide sequence ID" value="NM_111669.2"/>
</dbReference>
<dbReference type="FunCoup" id="Q9SFC4">
    <property type="interactions" value="3"/>
</dbReference>
<dbReference type="GlyCosmos" id="Q9SFC4">
    <property type="glycosylation" value="4 sites, No reported glycans"/>
</dbReference>
<dbReference type="GlyGen" id="Q9SFC4">
    <property type="glycosylation" value="4 sites"/>
</dbReference>
<dbReference type="PaxDb" id="3702-AT3G07900.1"/>
<dbReference type="ProteomicsDB" id="250795"/>
<dbReference type="EnsemblPlants" id="AT3G07900.1">
    <property type="protein sequence ID" value="AT3G07900.1"/>
    <property type="gene ID" value="AT3G07900"/>
</dbReference>
<dbReference type="GeneID" id="819981"/>
<dbReference type="Gramene" id="AT3G07900.1">
    <property type="protein sequence ID" value="AT3G07900.1"/>
    <property type="gene ID" value="AT3G07900"/>
</dbReference>
<dbReference type="KEGG" id="ath:AT3G07900"/>
<dbReference type="Araport" id="AT3G07900"/>
<dbReference type="TAIR" id="AT3G07900"/>
<dbReference type="eggNOG" id="ENOG502QTBC">
    <property type="taxonomic scope" value="Eukaryota"/>
</dbReference>
<dbReference type="HOGENOM" id="CLU_018420_7_3_1"/>
<dbReference type="InParanoid" id="Q9SFC4"/>
<dbReference type="OMA" id="PECMCNQ"/>
<dbReference type="OrthoDB" id="2016498at2759"/>
<dbReference type="PhylomeDB" id="Q9SFC4"/>
<dbReference type="PRO" id="PR:Q9SFC4"/>
<dbReference type="Proteomes" id="UP000006548">
    <property type="component" value="Chromosome 3"/>
</dbReference>
<dbReference type="ExpressionAtlas" id="Q9SFC4">
    <property type="expression patterns" value="baseline and differential"/>
</dbReference>
<dbReference type="GO" id="GO:0016020">
    <property type="term" value="C:membrane"/>
    <property type="evidence" value="ECO:0007669"/>
    <property type="project" value="UniProtKB-SubCell"/>
</dbReference>
<dbReference type="GO" id="GO:0016757">
    <property type="term" value="F:glycosyltransferase activity"/>
    <property type="evidence" value="ECO:0007669"/>
    <property type="project" value="UniProtKB-KW"/>
</dbReference>
<dbReference type="GO" id="GO:0006004">
    <property type="term" value="P:fucose metabolic process"/>
    <property type="evidence" value="ECO:0007669"/>
    <property type="project" value="UniProtKB-KW"/>
</dbReference>
<dbReference type="CDD" id="cd11299">
    <property type="entry name" value="O-FucT_plant"/>
    <property type="match status" value="1"/>
</dbReference>
<dbReference type="Gene3D" id="3.40.50.11350">
    <property type="match status" value="1"/>
</dbReference>
<dbReference type="InterPro" id="IPR024709">
    <property type="entry name" value="FucosylTrfase_pln"/>
</dbReference>
<dbReference type="InterPro" id="IPR019378">
    <property type="entry name" value="GDP-Fuc_O-FucTrfase"/>
</dbReference>
<dbReference type="PANTHER" id="PTHR31741:SF57">
    <property type="entry name" value="O-FUCOSYLTRANSFERASE 24"/>
    <property type="match status" value="1"/>
</dbReference>
<dbReference type="PANTHER" id="PTHR31741">
    <property type="entry name" value="OS02G0726500 PROTEIN-RELATED"/>
    <property type="match status" value="1"/>
</dbReference>
<dbReference type="Pfam" id="PF10250">
    <property type="entry name" value="O-FucT"/>
    <property type="match status" value="1"/>
</dbReference>
<dbReference type="PIRSF" id="PIRSF009360">
    <property type="entry name" value="UCP009360"/>
    <property type="match status" value="1"/>
</dbReference>
<protein>
    <recommendedName>
        <fullName evidence="4">O-fucosyltransferase 24</fullName>
        <shortName evidence="4">O-FucT-24</shortName>
        <ecNumber evidence="4">2.4.1.-</ecNumber>
    </recommendedName>
    <alternativeName>
        <fullName evidence="7">O-fucosyltransferase family protein</fullName>
    </alternativeName>
</protein>
<keyword id="KW-0119">Carbohydrate metabolism</keyword>
<keyword id="KW-0294">Fucose metabolism</keyword>
<keyword id="KW-0325">Glycoprotein</keyword>
<keyword id="KW-0328">Glycosyltransferase</keyword>
<keyword id="KW-0472">Membrane</keyword>
<keyword id="KW-1185">Reference proteome</keyword>
<keyword id="KW-0735">Signal-anchor</keyword>
<keyword id="KW-0808">Transferase</keyword>
<keyword id="KW-0812">Transmembrane</keyword>
<keyword id="KW-1133">Transmembrane helix</keyword>
<organism>
    <name type="scientific">Arabidopsis thaliana</name>
    <name type="common">Mouse-ear cress</name>
    <dbReference type="NCBI Taxonomy" id="3702"/>
    <lineage>
        <taxon>Eukaryota</taxon>
        <taxon>Viridiplantae</taxon>
        <taxon>Streptophyta</taxon>
        <taxon>Embryophyta</taxon>
        <taxon>Tracheophyta</taxon>
        <taxon>Spermatophyta</taxon>
        <taxon>Magnoliopsida</taxon>
        <taxon>eudicotyledons</taxon>
        <taxon>Gunneridae</taxon>
        <taxon>Pentapetalae</taxon>
        <taxon>rosids</taxon>
        <taxon>malvids</taxon>
        <taxon>Brassicales</taxon>
        <taxon>Brassicaceae</taxon>
        <taxon>Camelineae</taxon>
        <taxon>Arabidopsis</taxon>
    </lineage>
</organism>
<feature type="chain" id="PRO_0000442086" description="O-fucosyltransferase 24">
    <location>
        <begin position="1"/>
        <end position="579"/>
    </location>
</feature>
<feature type="transmembrane region" description="Helical; Signal-anchor for type II membrane protein" evidence="4">
    <location>
        <begin position="58"/>
        <end position="78"/>
    </location>
</feature>
<feature type="binding site" evidence="1">
    <location>
        <begin position="355"/>
        <end position="357"/>
    </location>
    <ligand>
        <name>substrate</name>
    </ligand>
</feature>
<feature type="glycosylation site" description="N-linked (GlcNAc...) asparagine" evidence="3">
    <location>
        <position position="133"/>
    </location>
</feature>
<feature type="glycosylation site" description="N-linked (GlcNAc...) asparagine" evidence="3">
    <location>
        <position position="528"/>
    </location>
</feature>
<feature type="glycosylation site" description="N-linked (GlcNAc...) asparagine" evidence="3">
    <location>
        <position position="573"/>
    </location>
</feature>
<feature type="glycosylation site" description="N-linked (GlcNAc...) asparagine" evidence="3">
    <location>
        <position position="576"/>
    </location>
</feature>
<proteinExistence type="evidence at transcript level"/>
<reference key="1">
    <citation type="submission" date="2017-04" db="EMBL/GenBank/DDBJ databases">
        <title>Arabidopsis glycosyltransferases: an update.</title>
        <authorList>
            <person name="Zeng W."/>
            <person name="Gluza P."/>
            <person name="Heazlewood J."/>
        </authorList>
    </citation>
    <scope>NUCLEOTIDE SEQUENCE [MRNA]</scope>
    <source>
        <strain>cv. Columbia</strain>
    </source>
</reference>
<reference key="2">
    <citation type="journal article" date="2000" name="Nature">
        <title>Sequence and analysis of chromosome 3 of the plant Arabidopsis thaliana.</title>
        <authorList>
            <person name="Salanoubat M."/>
            <person name="Lemcke K."/>
            <person name="Rieger M."/>
            <person name="Ansorge W."/>
            <person name="Unseld M."/>
            <person name="Fartmann B."/>
            <person name="Valle G."/>
            <person name="Bloecker H."/>
            <person name="Perez-Alonso M."/>
            <person name="Obermaier B."/>
            <person name="Delseny M."/>
            <person name="Boutry M."/>
            <person name="Grivell L.A."/>
            <person name="Mache R."/>
            <person name="Puigdomenech P."/>
            <person name="De Simone V."/>
            <person name="Choisne N."/>
            <person name="Artiguenave F."/>
            <person name="Robert C."/>
            <person name="Brottier P."/>
            <person name="Wincker P."/>
            <person name="Cattolico L."/>
            <person name="Weissenbach J."/>
            <person name="Saurin W."/>
            <person name="Quetier F."/>
            <person name="Schaefer M."/>
            <person name="Mueller-Auer S."/>
            <person name="Gabel C."/>
            <person name="Fuchs M."/>
            <person name="Benes V."/>
            <person name="Wurmbach E."/>
            <person name="Drzonek H."/>
            <person name="Erfle H."/>
            <person name="Jordan N."/>
            <person name="Bangert S."/>
            <person name="Wiedelmann R."/>
            <person name="Kranz H."/>
            <person name="Voss H."/>
            <person name="Holland R."/>
            <person name="Brandt P."/>
            <person name="Nyakatura G."/>
            <person name="Vezzi A."/>
            <person name="D'Angelo M."/>
            <person name="Pallavicini A."/>
            <person name="Toppo S."/>
            <person name="Simionati B."/>
            <person name="Conrad A."/>
            <person name="Hornischer K."/>
            <person name="Kauer G."/>
            <person name="Loehnert T.-H."/>
            <person name="Nordsiek G."/>
            <person name="Reichelt J."/>
            <person name="Scharfe M."/>
            <person name="Schoen O."/>
            <person name="Bargues M."/>
            <person name="Terol J."/>
            <person name="Climent J."/>
            <person name="Navarro P."/>
            <person name="Collado C."/>
            <person name="Perez-Perez A."/>
            <person name="Ottenwaelder B."/>
            <person name="Duchemin D."/>
            <person name="Cooke R."/>
            <person name="Laudie M."/>
            <person name="Berger-Llauro C."/>
            <person name="Purnelle B."/>
            <person name="Masuy D."/>
            <person name="de Haan M."/>
            <person name="Maarse A.C."/>
            <person name="Alcaraz J.-P."/>
            <person name="Cottet A."/>
            <person name="Casacuberta E."/>
            <person name="Monfort A."/>
            <person name="Argiriou A."/>
            <person name="Flores M."/>
            <person name="Liguori R."/>
            <person name="Vitale D."/>
            <person name="Mannhaupt G."/>
            <person name="Haase D."/>
            <person name="Schoof H."/>
            <person name="Rudd S."/>
            <person name="Zaccaria P."/>
            <person name="Mewes H.-W."/>
            <person name="Mayer K.F.X."/>
            <person name="Kaul S."/>
            <person name="Town C.D."/>
            <person name="Koo H.L."/>
            <person name="Tallon L.J."/>
            <person name="Jenkins J."/>
            <person name="Rooney T."/>
            <person name="Rizzo M."/>
            <person name="Walts A."/>
            <person name="Utterback T."/>
            <person name="Fujii C.Y."/>
            <person name="Shea T.P."/>
            <person name="Creasy T.H."/>
            <person name="Haas B."/>
            <person name="Maiti R."/>
            <person name="Wu D."/>
            <person name="Peterson J."/>
            <person name="Van Aken S."/>
            <person name="Pai G."/>
            <person name="Militscher J."/>
            <person name="Sellers P."/>
            <person name="Gill J.E."/>
            <person name="Feldblyum T.V."/>
            <person name="Preuss D."/>
            <person name="Lin X."/>
            <person name="Nierman W.C."/>
            <person name="Salzberg S.L."/>
            <person name="White O."/>
            <person name="Venter J.C."/>
            <person name="Fraser C.M."/>
            <person name="Kaneko T."/>
            <person name="Nakamura Y."/>
            <person name="Sato S."/>
            <person name="Kato T."/>
            <person name="Asamizu E."/>
            <person name="Sasamoto S."/>
            <person name="Kimura T."/>
            <person name="Idesawa K."/>
            <person name="Kawashima K."/>
            <person name="Kishida Y."/>
            <person name="Kiyokawa C."/>
            <person name="Kohara M."/>
            <person name="Matsumoto M."/>
            <person name="Matsuno A."/>
            <person name="Muraki A."/>
            <person name="Nakayama S."/>
            <person name="Nakazaki N."/>
            <person name="Shinpo S."/>
            <person name="Takeuchi C."/>
            <person name="Wada T."/>
            <person name="Watanabe A."/>
            <person name="Yamada M."/>
            <person name="Yasuda M."/>
            <person name="Tabata S."/>
        </authorList>
    </citation>
    <scope>NUCLEOTIDE SEQUENCE [LARGE SCALE GENOMIC DNA]</scope>
    <source>
        <strain>cv. Columbia</strain>
    </source>
</reference>
<reference key="3">
    <citation type="journal article" date="2017" name="Plant J.">
        <title>Araport11: a complete reannotation of the Arabidopsis thaliana reference genome.</title>
        <authorList>
            <person name="Cheng C.Y."/>
            <person name="Krishnakumar V."/>
            <person name="Chan A.P."/>
            <person name="Thibaud-Nissen F."/>
            <person name="Schobel S."/>
            <person name="Town C.D."/>
        </authorList>
    </citation>
    <scope>GENOME REANNOTATION</scope>
    <source>
        <strain>cv. Columbia</strain>
    </source>
</reference>
<reference key="4">
    <citation type="journal article" date="2003" name="Science">
        <title>Empirical analysis of transcriptional activity in the Arabidopsis genome.</title>
        <authorList>
            <person name="Yamada K."/>
            <person name="Lim J."/>
            <person name="Dale J.M."/>
            <person name="Chen H."/>
            <person name="Shinn P."/>
            <person name="Palm C.J."/>
            <person name="Southwick A.M."/>
            <person name="Wu H.C."/>
            <person name="Kim C.J."/>
            <person name="Nguyen M."/>
            <person name="Pham P.K."/>
            <person name="Cheuk R.F."/>
            <person name="Karlin-Newmann G."/>
            <person name="Liu S.X."/>
            <person name="Lam B."/>
            <person name="Sakano H."/>
            <person name="Wu T."/>
            <person name="Yu G."/>
            <person name="Miranda M."/>
            <person name="Quach H.L."/>
            <person name="Tripp M."/>
            <person name="Chang C.H."/>
            <person name="Lee J.M."/>
            <person name="Toriumi M.J."/>
            <person name="Chan M.M."/>
            <person name="Tang C.C."/>
            <person name="Onodera C.S."/>
            <person name="Deng J.M."/>
            <person name="Akiyama K."/>
            <person name="Ansari Y."/>
            <person name="Arakawa T."/>
            <person name="Banh J."/>
            <person name="Banno F."/>
            <person name="Bowser L."/>
            <person name="Brooks S.Y."/>
            <person name="Carninci P."/>
            <person name="Chao Q."/>
            <person name="Choy N."/>
            <person name="Enju A."/>
            <person name="Goldsmith A.D."/>
            <person name="Gurjal M."/>
            <person name="Hansen N.F."/>
            <person name="Hayashizaki Y."/>
            <person name="Johnson-Hopson C."/>
            <person name="Hsuan V.W."/>
            <person name="Iida K."/>
            <person name="Karnes M."/>
            <person name="Khan S."/>
            <person name="Koesema E."/>
            <person name="Ishida J."/>
            <person name="Jiang P.X."/>
            <person name="Jones T."/>
            <person name="Kawai J."/>
            <person name="Kamiya A."/>
            <person name="Meyers C."/>
            <person name="Nakajima M."/>
            <person name="Narusaka M."/>
            <person name="Seki M."/>
            <person name="Sakurai T."/>
            <person name="Satou M."/>
            <person name="Tamse R."/>
            <person name="Vaysberg M."/>
            <person name="Wallender E.K."/>
            <person name="Wong C."/>
            <person name="Yamamura Y."/>
            <person name="Yuan S."/>
            <person name="Shinozaki K."/>
            <person name="Davis R.W."/>
            <person name="Theologis A."/>
            <person name="Ecker J.R."/>
        </authorList>
    </citation>
    <scope>NUCLEOTIDE SEQUENCE [LARGE SCALE MRNA]</scope>
    <source>
        <strain>cv. Columbia</strain>
    </source>
</reference>
<reference key="5">
    <citation type="journal article" date="2012" name="Front. Plant Sci.">
        <title>Plant glycosyltransferases beyond CAZy: a perspective on DUF families.</title>
        <authorList>
            <person name="Hansen S.F."/>
            <person name="Harholt J."/>
            <person name="Oikawa A."/>
            <person name="Scheller H.V."/>
        </authorList>
    </citation>
    <scope>GENE FAMILY</scope>
    <scope>REVIEW</scope>
</reference>
<reference key="6">
    <citation type="journal article" date="2012" name="PLoS ONE">
        <title>The FRIABLE1 gene product affects cell adhesion in Arabidopsis.</title>
        <authorList>
            <person name="Neumetzler L."/>
            <person name="Humphrey T."/>
            <person name="Lumba S."/>
            <person name="Snyder S."/>
            <person name="Yeats T.H."/>
            <person name="Usadel B."/>
            <person name="Vasilevski A."/>
            <person name="Patel J."/>
            <person name="Rose J.K."/>
            <person name="Persson S."/>
            <person name="Bonetta D."/>
        </authorList>
    </citation>
    <scope>GENE FAMILY</scope>
</reference>
<reference key="7">
    <citation type="journal article" date="2012" name="PLoS ONE">
        <title>Identification of putative rhamnogalacturonan-II specific glycosyltransferases in Arabidopsis using a combination of bioinformatics approaches.</title>
        <authorList>
            <person name="Voxeur A."/>
            <person name="Andre A."/>
            <person name="Breton C."/>
            <person name="Lerouge P."/>
        </authorList>
    </citation>
    <scope>GENE FAMILY</scope>
</reference>
<reference key="8">
    <citation type="journal article" date="2013" name="Plant J.">
        <title>Identification of an additional protein involved in mannan biosynthesis.</title>
        <authorList>
            <person name="Wang Y."/>
            <person name="Mortimer J.C."/>
            <person name="Davis J."/>
            <person name="Dupree P."/>
            <person name="Keegstra K."/>
        </authorList>
    </citation>
    <scope>GENE FAMILY</scope>
</reference>
<reference key="9">
    <citation type="journal article" date="2014" name="Plant J.">
        <title>The plant glycosyltransferase clone collection for functional genomics.</title>
        <authorList>
            <person name="Lao J."/>
            <person name="Oikawa A."/>
            <person name="Bromley J.R."/>
            <person name="McInerney P."/>
            <person name="Suttangkakul A."/>
            <person name="Smith-Moritz A.M."/>
            <person name="Plahar H."/>
            <person name="Chiu T.-Y."/>
            <person name="Gonzalez Fernandez-Nino S.M.G."/>
            <person name="Ebert B."/>
            <person name="Yang F."/>
            <person name="Christiansen K.M."/>
            <person name="Hansen S.F."/>
            <person name="Stonebloom S."/>
            <person name="Adams P.D."/>
            <person name="Ronald P.C."/>
            <person name="Hillson N.J."/>
            <person name="Hadi M.Z."/>
            <person name="Vega-Sanchez M.E."/>
            <person name="Loque D."/>
            <person name="Scheller H.V."/>
            <person name="Heazlewood J.L."/>
        </authorList>
    </citation>
    <scope>WEB RESOURCE</scope>
</reference>
<sequence length="579" mass="65364">MGTWKNKNSNKKNRVSYISVPAQIINSVSSSSLHKFLDNKSSKKNTSKFFFNLRNPKLWAFSLFLLSILGISLRLGLCLSHFGSGDHESQLQSSDSNGSPKSHMGFAYIRSSTTQVEISNAKDRSLDMGVEKNETFGGHQSHLIIPNGNGHDDKNYDFWKQPDGLGYKPCLDFSIEYRRESKKILVERRKYLMVVVSGGLNQQKIQIVDAVVIARILGAVLVVPILQINLIWGDESEFSDIFDLEQFKSVLANDVKIVSLLPASKVMTRPSEDGSMPFNASPQWIRSHYPKRFNREGVLLLRRLDSRLSKDLPSDLQKLRCKVAFEALKFSPRVMEMGTKLAERMRSKGPYIALHLRMEKDVWVRTGCLSGLSSKYDEIVNIERIKRPELLTAKSSMTSNERKLAGLCPLNAKEVTRLLRALGAPRDARIYWAGGEPLGGKEALKPLTSEFPHLYNKYDIALPLELKPFAKRASIMAAIDYIVCKESDVFMASHGGNMGHAIQGHRAYEGHKKIITPNKRHMLPYFVNSSLTETEFEKMIKKLHRQSLGQPELRISKAGRDVTKYPVPECMCNQSNTTI</sequence>
<accession>Q9SFC4</accession>
<accession>Q944H7</accession>
<evidence type="ECO:0000250" key="1">
    <source>
        <dbReference type="UniProtKB" id="Q9H488"/>
    </source>
</evidence>
<evidence type="ECO:0000255" key="2"/>
<evidence type="ECO:0000255" key="3">
    <source>
        <dbReference type="PROSITE-ProRule" id="PRU00498"/>
    </source>
</evidence>
<evidence type="ECO:0000305" key="4"/>
<evidence type="ECO:0000312" key="5">
    <source>
        <dbReference type="Araport" id="AT3G07900"/>
    </source>
</evidence>
<evidence type="ECO:0000312" key="6">
    <source>
        <dbReference type="EMBL" id="AAF21200.1"/>
    </source>
</evidence>
<evidence type="ECO:0000312" key="7">
    <source>
        <dbReference type="EMBL" id="ARJ31428.1"/>
    </source>
</evidence>
<comment type="pathway">
    <text evidence="4">Glycan metabolism.</text>
</comment>
<comment type="subcellular location">
    <subcellularLocation>
        <location evidence="2">Membrane</location>
        <topology evidence="4">Single-pass type II membrane protein</topology>
    </subcellularLocation>
</comment>
<comment type="similarity">
    <text evidence="4">Belongs to the glycosyltransferase GT106 family.</text>
</comment>
<comment type="sequence caution" evidence="4">
    <conflict type="frameshift">
        <sequence resource="EMBL-CDS" id="AAL16192"/>
    </conflict>
</comment>
<gene>
    <name evidence="4" type="primary">OFUT24</name>
    <name evidence="5" type="ordered locus">At3g07900</name>
    <name evidence="6" type="ORF">F17A17.24</name>
</gene>
<name>OFT24_ARATH</name>